<accession>Q5PKX2</accession>
<feature type="chain" id="PRO_0000254370" description="ATP synthase subunit beta">
    <location>
        <begin position="1"/>
        <end position="460"/>
    </location>
</feature>
<feature type="binding site" evidence="1">
    <location>
        <begin position="150"/>
        <end position="157"/>
    </location>
    <ligand>
        <name>ATP</name>
        <dbReference type="ChEBI" id="CHEBI:30616"/>
    </ligand>
</feature>
<evidence type="ECO:0000255" key="1">
    <source>
        <dbReference type="HAMAP-Rule" id="MF_01347"/>
    </source>
</evidence>
<dbReference type="EC" id="7.1.2.2" evidence="1"/>
<dbReference type="EMBL" id="CP000026">
    <property type="protein sequence ID" value="AAV79496.1"/>
    <property type="molecule type" value="Genomic_DNA"/>
</dbReference>
<dbReference type="RefSeq" id="WP_000190495.1">
    <property type="nucleotide sequence ID" value="NC_006511.1"/>
</dbReference>
<dbReference type="SMR" id="Q5PKX2"/>
<dbReference type="KEGG" id="spt:SPA3704"/>
<dbReference type="HOGENOM" id="CLU_022398_0_2_6"/>
<dbReference type="Proteomes" id="UP000008185">
    <property type="component" value="Chromosome"/>
</dbReference>
<dbReference type="GO" id="GO:0005886">
    <property type="term" value="C:plasma membrane"/>
    <property type="evidence" value="ECO:0007669"/>
    <property type="project" value="UniProtKB-SubCell"/>
</dbReference>
<dbReference type="GO" id="GO:0045259">
    <property type="term" value="C:proton-transporting ATP synthase complex"/>
    <property type="evidence" value="ECO:0007669"/>
    <property type="project" value="UniProtKB-KW"/>
</dbReference>
<dbReference type="GO" id="GO:0005524">
    <property type="term" value="F:ATP binding"/>
    <property type="evidence" value="ECO:0007669"/>
    <property type="project" value="UniProtKB-UniRule"/>
</dbReference>
<dbReference type="GO" id="GO:0016887">
    <property type="term" value="F:ATP hydrolysis activity"/>
    <property type="evidence" value="ECO:0007669"/>
    <property type="project" value="InterPro"/>
</dbReference>
<dbReference type="GO" id="GO:0046933">
    <property type="term" value="F:proton-transporting ATP synthase activity, rotational mechanism"/>
    <property type="evidence" value="ECO:0007669"/>
    <property type="project" value="UniProtKB-UniRule"/>
</dbReference>
<dbReference type="CDD" id="cd18110">
    <property type="entry name" value="ATP-synt_F1_beta_C"/>
    <property type="match status" value="1"/>
</dbReference>
<dbReference type="CDD" id="cd18115">
    <property type="entry name" value="ATP-synt_F1_beta_N"/>
    <property type="match status" value="1"/>
</dbReference>
<dbReference type="CDD" id="cd01133">
    <property type="entry name" value="F1-ATPase_beta_CD"/>
    <property type="match status" value="1"/>
</dbReference>
<dbReference type="FunFam" id="1.10.1140.10:FF:000001">
    <property type="entry name" value="ATP synthase subunit beta"/>
    <property type="match status" value="1"/>
</dbReference>
<dbReference type="FunFam" id="2.40.10.170:FF:000003">
    <property type="entry name" value="ATP synthase subunit beta"/>
    <property type="match status" value="1"/>
</dbReference>
<dbReference type="FunFam" id="3.40.50.300:FF:000004">
    <property type="entry name" value="ATP synthase subunit beta"/>
    <property type="match status" value="1"/>
</dbReference>
<dbReference type="Gene3D" id="2.40.10.170">
    <property type="match status" value="1"/>
</dbReference>
<dbReference type="Gene3D" id="1.10.1140.10">
    <property type="entry name" value="Bovine Mitochondrial F1-atpase, Atp Synthase Beta Chain, Chain D, domain 3"/>
    <property type="match status" value="1"/>
</dbReference>
<dbReference type="Gene3D" id="3.40.50.300">
    <property type="entry name" value="P-loop containing nucleotide triphosphate hydrolases"/>
    <property type="match status" value="1"/>
</dbReference>
<dbReference type="HAMAP" id="MF_01347">
    <property type="entry name" value="ATP_synth_beta_bact"/>
    <property type="match status" value="1"/>
</dbReference>
<dbReference type="InterPro" id="IPR003593">
    <property type="entry name" value="AAA+_ATPase"/>
</dbReference>
<dbReference type="InterPro" id="IPR055190">
    <property type="entry name" value="ATP-synt_VA_C"/>
</dbReference>
<dbReference type="InterPro" id="IPR005722">
    <property type="entry name" value="ATP_synth_F1_bsu"/>
</dbReference>
<dbReference type="InterPro" id="IPR020003">
    <property type="entry name" value="ATPase_a/bsu_AS"/>
</dbReference>
<dbReference type="InterPro" id="IPR050053">
    <property type="entry name" value="ATPase_alpha/beta_chains"/>
</dbReference>
<dbReference type="InterPro" id="IPR004100">
    <property type="entry name" value="ATPase_F1/V1/A1_a/bsu_N"/>
</dbReference>
<dbReference type="InterPro" id="IPR036121">
    <property type="entry name" value="ATPase_F1/V1/A1_a/bsu_N_sf"/>
</dbReference>
<dbReference type="InterPro" id="IPR000194">
    <property type="entry name" value="ATPase_F1/V1/A1_a/bsu_nucl-bd"/>
</dbReference>
<dbReference type="InterPro" id="IPR024034">
    <property type="entry name" value="ATPase_F1/V1_b/a_C"/>
</dbReference>
<dbReference type="InterPro" id="IPR027417">
    <property type="entry name" value="P-loop_NTPase"/>
</dbReference>
<dbReference type="NCBIfam" id="TIGR01039">
    <property type="entry name" value="atpD"/>
    <property type="match status" value="1"/>
</dbReference>
<dbReference type="PANTHER" id="PTHR15184">
    <property type="entry name" value="ATP SYNTHASE"/>
    <property type="match status" value="1"/>
</dbReference>
<dbReference type="PANTHER" id="PTHR15184:SF71">
    <property type="entry name" value="ATP SYNTHASE SUBUNIT BETA, MITOCHONDRIAL"/>
    <property type="match status" value="1"/>
</dbReference>
<dbReference type="Pfam" id="PF00006">
    <property type="entry name" value="ATP-synt_ab"/>
    <property type="match status" value="1"/>
</dbReference>
<dbReference type="Pfam" id="PF02874">
    <property type="entry name" value="ATP-synt_ab_N"/>
    <property type="match status" value="1"/>
</dbReference>
<dbReference type="Pfam" id="PF22919">
    <property type="entry name" value="ATP-synt_VA_C"/>
    <property type="match status" value="1"/>
</dbReference>
<dbReference type="SMART" id="SM00382">
    <property type="entry name" value="AAA"/>
    <property type="match status" value="1"/>
</dbReference>
<dbReference type="SUPFAM" id="SSF47917">
    <property type="entry name" value="C-terminal domain of alpha and beta subunits of F1 ATP synthase"/>
    <property type="match status" value="1"/>
</dbReference>
<dbReference type="SUPFAM" id="SSF50615">
    <property type="entry name" value="N-terminal domain of alpha and beta subunits of F1 ATP synthase"/>
    <property type="match status" value="1"/>
</dbReference>
<dbReference type="SUPFAM" id="SSF52540">
    <property type="entry name" value="P-loop containing nucleoside triphosphate hydrolases"/>
    <property type="match status" value="1"/>
</dbReference>
<dbReference type="PROSITE" id="PS00152">
    <property type="entry name" value="ATPASE_ALPHA_BETA"/>
    <property type="match status" value="1"/>
</dbReference>
<gene>
    <name evidence="1" type="primary">atpD</name>
    <name type="ordered locus">SPA3704</name>
</gene>
<sequence length="460" mass="50269">MATGKIVQVIGAVVDVDFPQDAVPRVYDALEVQNGNEKLVLEVQQQLGGGIVRTIAMGSSDGLRRGLDVKDLEHPIEVPVGKATLGRIMNVLGEPVDMKGEIGEEERWAIHRAAPSYEELSNSQELLETGIKVIDLMCPFAKGGKVGLFGGAGVGKTVNMMELIRNIAIEHSGYSVFAGVGERTREGNDFYHEMTDSNVIDKVSLVYGQMNEPPGNRLRVALTGLTMAEKFRDEGRDVLLFVDNIYRYTLAGTEVSALLGRMPSAVGYQPTLAEEMGVLQERITSTKTGSITSVQAVYVPADDLTDPSPATTFAHLDATVVLSRQIASLGIYPAVDPLDSTSRQLDPLVVGQEHYDTARGVQSILQRYQELKDIIAILGMDELSEEDKLVVARARKIQRFLSQPFFVAEVFTGSPGKYVSLKDTIRGFKGIMEGEYDHLPEQAFYMVGSIDEAVEKAKKL</sequence>
<protein>
    <recommendedName>
        <fullName evidence="1">ATP synthase subunit beta</fullName>
        <ecNumber evidence="1">7.1.2.2</ecNumber>
    </recommendedName>
    <alternativeName>
        <fullName evidence="1">ATP synthase F1 sector subunit beta</fullName>
    </alternativeName>
    <alternativeName>
        <fullName evidence="1">F-ATPase subunit beta</fullName>
    </alternativeName>
</protein>
<organism>
    <name type="scientific">Salmonella paratyphi A (strain ATCC 9150 / SARB42)</name>
    <dbReference type="NCBI Taxonomy" id="295319"/>
    <lineage>
        <taxon>Bacteria</taxon>
        <taxon>Pseudomonadati</taxon>
        <taxon>Pseudomonadota</taxon>
        <taxon>Gammaproteobacteria</taxon>
        <taxon>Enterobacterales</taxon>
        <taxon>Enterobacteriaceae</taxon>
        <taxon>Salmonella</taxon>
    </lineage>
</organism>
<name>ATPB_SALPA</name>
<reference key="1">
    <citation type="journal article" date="2004" name="Nat. Genet.">
        <title>Comparison of genome degradation in Paratyphi A and Typhi, human-restricted serovars of Salmonella enterica that cause typhoid.</title>
        <authorList>
            <person name="McClelland M."/>
            <person name="Sanderson K.E."/>
            <person name="Clifton S.W."/>
            <person name="Latreille P."/>
            <person name="Porwollik S."/>
            <person name="Sabo A."/>
            <person name="Meyer R."/>
            <person name="Bieri T."/>
            <person name="Ozersky P."/>
            <person name="McLellan M."/>
            <person name="Harkins C.R."/>
            <person name="Wang C."/>
            <person name="Nguyen C."/>
            <person name="Berghoff A."/>
            <person name="Elliott G."/>
            <person name="Kohlberg S."/>
            <person name="Strong C."/>
            <person name="Du F."/>
            <person name="Carter J."/>
            <person name="Kremizki C."/>
            <person name="Layman D."/>
            <person name="Leonard S."/>
            <person name="Sun H."/>
            <person name="Fulton L."/>
            <person name="Nash W."/>
            <person name="Miner T."/>
            <person name="Minx P."/>
            <person name="Delehaunty K."/>
            <person name="Fronick C."/>
            <person name="Magrini V."/>
            <person name="Nhan M."/>
            <person name="Warren W."/>
            <person name="Florea L."/>
            <person name="Spieth J."/>
            <person name="Wilson R.K."/>
        </authorList>
    </citation>
    <scope>NUCLEOTIDE SEQUENCE [LARGE SCALE GENOMIC DNA]</scope>
    <source>
        <strain>ATCC 9150 / SARB42</strain>
    </source>
</reference>
<proteinExistence type="inferred from homology"/>
<keyword id="KW-0066">ATP synthesis</keyword>
<keyword id="KW-0067">ATP-binding</keyword>
<keyword id="KW-0997">Cell inner membrane</keyword>
<keyword id="KW-1003">Cell membrane</keyword>
<keyword id="KW-0139">CF(1)</keyword>
<keyword id="KW-0375">Hydrogen ion transport</keyword>
<keyword id="KW-0406">Ion transport</keyword>
<keyword id="KW-0472">Membrane</keyword>
<keyword id="KW-0547">Nucleotide-binding</keyword>
<keyword id="KW-1278">Translocase</keyword>
<keyword id="KW-0813">Transport</keyword>
<comment type="function">
    <text evidence="1">Produces ATP from ADP in the presence of a proton gradient across the membrane. The catalytic sites are hosted primarily by the beta subunits.</text>
</comment>
<comment type="catalytic activity">
    <reaction evidence="1">
        <text>ATP + H2O + 4 H(+)(in) = ADP + phosphate + 5 H(+)(out)</text>
        <dbReference type="Rhea" id="RHEA:57720"/>
        <dbReference type="ChEBI" id="CHEBI:15377"/>
        <dbReference type="ChEBI" id="CHEBI:15378"/>
        <dbReference type="ChEBI" id="CHEBI:30616"/>
        <dbReference type="ChEBI" id="CHEBI:43474"/>
        <dbReference type="ChEBI" id="CHEBI:456216"/>
        <dbReference type="EC" id="7.1.2.2"/>
    </reaction>
</comment>
<comment type="subunit">
    <text evidence="1">F-type ATPases have 2 components, CF(1) - the catalytic core - and CF(0) - the membrane proton channel. CF(1) has five subunits: alpha(3), beta(3), gamma(1), delta(1), epsilon(1). CF(0) has three main subunits: a(1), b(2) and c(9-12). The alpha and beta chains form an alternating ring which encloses part of the gamma chain. CF(1) is attached to CF(0) by a central stalk formed by the gamma and epsilon chains, while a peripheral stalk is formed by the delta and b chains.</text>
</comment>
<comment type="subcellular location">
    <subcellularLocation>
        <location evidence="1">Cell inner membrane</location>
        <topology evidence="1">Peripheral membrane protein</topology>
    </subcellularLocation>
</comment>
<comment type="similarity">
    <text evidence="1">Belongs to the ATPase alpha/beta chains family.</text>
</comment>